<name>AHPD_HYPNA</name>
<proteinExistence type="inferred from homology"/>
<organism>
    <name type="scientific">Hyphomonas neptunium (strain ATCC 15444)</name>
    <dbReference type="NCBI Taxonomy" id="228405"/>
    <lineage>
        <taxon>Bacteria</taxon>
        <taxon>Pseudomonadati</taxon>
        <taxon>Pseudomonadota</taxon>
        <taxon>Alphaproteobacteria</taxon>
        <taxon>Hyphomonadales</taxon>
        <taxon>Hyphomonadaceae</taxon>
        <taxon>Hyphomonas</taxon>
    </lineage>
</organism>
<keyword id="KW-0049">Antioxidant</keyword>
<keyword id="KW-1015">Disulfide bond</keyword>
<keyword id="KW-0560">Oxidoreductase</keyword>
<keyword id="KW-0575">Peroxidase</keyword>
<keyword id="KW-0676">Redox-active center</keyword>
<keyword id="KW-1185">Reference proteome</keyword>
<reference key="1">
    <citation type="journal article" date="2006" name="J. Bacteriol.">
        <title>Comparative genomic evidence for a close relationship between the dimorphic prosthecate bacteria Hyphomonas neptunium and Caulobacter crescentus.</title>
        <authorList>
            <person name="Badger J.H."/>
            <person name="Hoover T.R."/>
            <person name="Brun Y.V."/>
            <person name="Weiner R.M."/>
            <person name="Laub M.T."/>
            <person name="Alexandre G."/>
            <person name="Mrazek J."/>
            <person name="Ren Q."/>
            <person name="Paulsen I.T."/>
            <person name="Nelson K.E."/>
            <person name="Khouri H.M."/>
            <person name="Radune D."/>
            <person name="Sosa J."/>
            <person name="Dodson R.J."/>
            <person name="Sullivan S.A."/>
            <person name="Rosovitz M.J."/>
            <person name="Madupu R."/>
            <person name="Brinkac L.M."/>
            <person name="Durkin A.S."/>
            <person name="Daugherty S.C."/>
            <person name="Kothari S.P."/>
            <person name="Giglio M.G."/>
            <person name="Zhou L."/>
            <person name="Haft D.H."/>
            <person name="Selengut J.D."/>
            <person name="Davidsen T.M."/>
            <person name="Yang Q."/>
            <person name="Zafar N."/>
            <person name="Ward N.L."/>
        </authorList>
    </citation>
    <scope>NUCLEOTIDE SEQUENCE [LARGE SCALE GENOMIC DNA]</scope>
    <source>
        <strain>ATCC 15444</strain>
    </source>
</reference>
<dbReference type="EC" id="1.11.1.28" evidence="2"/>
<dbReference type="EMBL" id="CP000158">
    <property type="protein sequence ID" value="ABI77945.1"/>
    <property type="molecule type" value="Genomic_DNA"/>
</dbReference>
<dbReference type="RefSeq" id="WP_011648008.1">
    <property type="nucleotide sequence ID" value="NC_008358.1"/>
</dbReference>
<dbReference type="SMR" id="Q0BXT2"/>
<dbReference type="STRING" id="228405.HNE_3034"/>
<dbReference type="PeroxiBase" id="4635">
    <property type="entry name" value="HnAhpD"/>
</dbReference>
<dbReference type="KEGG" id="hne:HNE_3034"/>
<dbReference type="eggNOG" id="COG2128">
    <property type="taxonomic scope" value="Bacteria"/>
</dbReference>
<dbReference type="HOGENOM" id="CLU_105328_0_0_5"/>
<dbReference type="Proteomes" id="UP000001959">
    <property type="component" value="Chromosome"/>
</dbReference>
<dbReference type="GO" id="GO:0008785">
    <property type="term" value="F:alkyl hydroperoxide reductase activity"/>
    <property type="evidence" value="ECO:0007669"/>
    <property type="project" value="UniProtKB-UniRule"/>
</dbReference>
<dbReference type="GO" id="GO:0015036">
    <property type="term" value="F:disulfide oxidoreductase activity"/>
    <property type="evidence" value="ECO:0007669"/>
    <property type="project" value="TreeGrafter"/>
</dbReference>
<dbReference type="GO" id="GO:0032843">
    <property type="term" value="F:hydroperoxide reductase activity"/>
    <property type="evidence" value="ECO:0007669"/>
    <property type="project" value="InterPro"/>
</dbReference>
<dbReference type="GO" id="GO:0051920">
    <property type="term" value="F:peroxiredoxin activity"/>
    <property type="evidence" value="ECO:0007669"/>
    <property type="project" value="InterPro"/>
</dbReference>
<dbReference type="GO" id="GO:0045454">
    <property type="term" value="P:cell redox homeostasis"/>
    <property type="evidence" value="ECO:0007669"/>
    <property type="project" value="TreeGrafter"/>
</dbReference>
<dbReference type="GO" id="GO:0006979">
    <property type="term" value="P:response to oxidative stress"/>
    <property type="evidence" value="ECO:0007669"/>
    <property type="project" value="InterPro"/>
</dbReference>
<dbReference type="Gene3D" id="1.20.1290.10">
    <property type="entry name" value="AhpD-like"/>
    <property type="match status" value="1"/>
</dbReference>
<dbReference type="HAMAP" id="MF_01676">
    <property type="entry name" value="AhpD"/>
    <property type="match status" value="1"/>
</dbReference>
<dbReference type="InterPro" id="IPR004674">
    <property type="entry name" value="AhpD"/>
</dbReference>
<dbReference type="InterPro" id="IPR029032">
    <property type="entry name" value="AhpD-like"/>
</dbReference>
<dbReference type="InterPro" id="IPR004675">
    <property type="entry name" value="AhpD_core"/>
</dbReference>
<dbReference type="InterPro" id="IPR003779">
    <property type="entry name" value="CMD-like"/>
</dbReference>
<dbReference type="NCBIfam" id="TIGR00777">
    <property type="entry name" value="ahpD"/>
    <property type="match status" value="1"/>
</dbReference>
<dbReference type="NCBIfam" id="TIGR00778">
    <property type="entry name" value="ahpD_dom"/>
    <property type="match status" value="1"/>
</dbReference>
<dbReference type="PANTHER" id="PTHR33930">
    <property type="entry name" value="ALKYL HYDROPEROXIDE REDUCTASE AHPD"/>
    <property type="match status" value="1"/>
</dbReference>
<dbReference type="PANTHER" id="PTHR33930:SF7">
    <property type="entry name" value="ALKYL HYDROPEROXIDE REDUCTASE AHPD"/>
    <property type="match status" value="1"/>
</dbReference>
<dbReference type="Pfam" id="PF02627">
    <property type="entry name" value="CMD"/>
    <property type="match status" value="1"/>
</dbReference>
<dbReference type="SUPFAM" id="SSF69118">
    <property type="entry name" value="AhpD-like"/>
    <property type="match status" value="1"/>
</dbReference>
<comment type="function">
    <text evidence="2">Antioxidant protein with alkyl hydroperoxidase activity. Required for the reduction of the AhpC active site cysteine residues and for the regeneration of the AhpC enzyme activity.</text>
</comment>
<comment type="catalytic activity">
    <reaction evidence="2">
        <text>N(6)-[(R)-dihydrolipoyl]-L-lysyl-[lipoyl-carrier protein] + a hydroperoxide = N(6)-[(R)-lipoyl]-L-lysyl-[lipoyl-carrier protein] + an alcohol + H2O</text>
        <dbReference type="Rhea" id="RHEA:62636"/>
        <dbReference type="Rhea" id="RHEA-COMP:10502"/>
        <dbReference type="Rhea" id="RHEA-COMP:16355"/>
        <dbReference type="ChEBI" id="CHEBI:15377"/>
        <dbReference type="ChEBI" id="CHEBI:30879"/>
        <dbReference type="ChEBI" id="CHEBI:35924"/>
        <dbReference type="ChEBI" id="CHEBI:83099"/>
        <dbReference type="ChEBI" id="CHEBI:83100"/>
        <dbReference type="EC" id="1.11.1.28"/>
    </reaction>
</comment>
<comment type="similarity">
    <text evidence="2">Belongs to the AhpD family.</text>
</comment>
<gene>
    <name evidence="2" type="primary">ahpD</name>
    <name type="ordered locus">HNE_3034</name>
</gene>
<sequence length="180" mass="19114">MSLETLKTLIPDYAKDIRLNIGSLANETILSEQQKYGCYLASAHAVGEAQTLRAIEAEARGKLSVEALNAAKAASAIMGMNNVYYRATHLVSNTTYTTMPARLRMNVIGNPGVEKVDFELWSLAVSAINGCGMCLDAHEAELRKHGVTSEQIQAAIRIGAVVNAAARVLAAEAALAAEPA</sequence>
<feature type="chain" id="PRO_0000359492" description="Alkyl hydroperoxide reductase AhpD">
    <location>
        <begin position="1"/>
        <end position="180"/>
    </location>
</feature>
<feature type="active site" description="Proton donor" evidence="2">
    <location>
        <position position="131"/>
    </location>
</feature>
<feature type="active site" description="Cysteine sulfenic acid (-SOH) intermediate" evidence="2">
    <location>
        <position position="134"/>
    </location>
</feature>
<feature type="disulfide bond" evidence="1">
    <location>
        <begin position="131"/>
        <end position="134"/>
    </location>
</feature>
<feature type="disulfide bond" description="Interchain (with AhpC); in linked form" evidence="2">
    <location>
        <position position="134"/>
    </location>
</feature>
<accession>Q0BXT2</accession>
<protein>
    <recommendedName>
        <fullName evidence="2">Alkyl hydroperoxide reductase AhpD</fullName>
        <ecNumber evidence="2">1.11.1.28</ecNumber>
    </recommendedName>
    <alternativeName>
        <fullName evidence="2">Alkylhydroperoxidase AhpD</fullName>
    </alternativeName>
</protein>
<evidence type="ECO:0000250" key="1"/>
<evidence type="ECO:0000255" key="2">
    <source>
        <dbReference type="HAMAP-Rule" id="MF_01676"/>
    </source>
</evidence>